<protein>
    <recommendedName>
        <fullName evidence="1">SsrA-binding protein</fullName>
    </recommendedName>
    <alternativeName>
        <fullName evidence="1">Small protein B</fullName>
    </alternativeName>
</protein>
<organism>
    <name type="scientific">Rickettsia conorii (strain ATCC VR-613 / Malish 7)</name>
    <dbReference type="NCBI Taxonomy" id="272944"/>
    <lineage>
        <taxon>Bacteria</taxon>
        <taxon>Pseudomonadati</taxon>
        <taxon>Pseudomonadota</taxon>
        <taxon>Alphaproteobacteria</taxon>
        <taxon>Rickettsiales</taxon>
        <taxon>Rickettsiaceae</taxon>
        <taxon>Rickettsieae</taxon>
        <taxon>Rickettsia</taxon>
        <taxon>spotted fever group</taxon>
    </lineage>
</organism>
<keyword id="KW-0963">Cytoplasm</keyword>
<keyword id="KW-0694">RNA-binding</keyword>
<gene>
    <name evidence="1" type="primary">smpB</name>
    <name type="ordered locus">RC0596</name>
</gene>
<name>SSRP_RICCN</name>
<accession>Q92I24</accession>
<proteinExistence type="inferred from homology"/>
<evidence type="ECO:0000255" key="1">
    <source>
        <dbReference type="HAMAP-Rule" id="MF_00023"/>
    </source>
</evidence>
<feature type="chain" id="PRO_0000103016" description="SsrA-binding protein">
    <location>
        <begin position="1"/>
        <end position="152"/>
    </location>
</feature>
<comment type="function">
    <text evidence="1">Required for rescue of stalled ribosomes mediated by trans-translation. Binds to transfer-messenger RNA (tmRNA), required for stable association of tmRNA with ribosomes. tmRNA and SmpB together mimic tRNA shape, replacing the anticodon stem-loop with SmpB. tmRNA is encoded by the ssrA gene; the 2 termini fold to resemble tRNA(Ala) and it encodes a 'tag peptide', a short internal open reading frame. During trans-translation Ala-aminoacylated tmRNA acts like a tRNA, entering the A-site of stalled ribosomes, displacing the stalled mRNA. The ribosome then switches to translate the ORF on the tmRNA; the nascent peptide is terminated with the 'tag peptide' encoded by the tmRNA and targeted for degradation. The ribosome is freed to recommence translation, which seems to be the essential function of trans-translation.</text>
</comment>
<comment type="subcellular location">
    <subcellularLocation>
        <location evidence="1">Cytoplasm</location>
    </subcellularLocation>
    <text evidence="1">The tmRNA-SmpB complex associates with stalled 70S ribosomes.</text>
</comment>
<comment type="similarity">
    <text evidence="1">Belongs to the SmpB family.</text>
</comment>
<sequence length="152" mass="17979">MTEYKKVIAQNKKALFNYFIEERLEAGIVLKGSEVRSLRQGKASIEESHAADTRHEVFLYNCHIAEYEKANRFNHATRRPRKLLLHTKEIKKIIGRIRIKGYTLVALSMYFNKKNKVKVELGIAKGKKLHDKRESIKEKDWKRDQSRLIRQK</sequence>
<dbReference type="EMBL" id="AE006914">
    <property type="protein sequence ID" value="AAL03134.1"/>
    <property type="molecule type" value="Genomic_DNA"/>
</dbReference>
<dbReference type="PIR" id="D97774">
    <property type="entry name" value="D97774"/>
</dbReference>
<dbReference type="RefSeq" id="WP_010977227.1">
    <property type="nucleotide sequence ID" value="NC_003103.1"/>
</dbReference>
<dbReference type="SMR" id="Q92I24"/>
<dbReference type="GeneID" id="928787"/>
<dbReference type="KEGG" id="rco:RC0596"/>
<dbReference type="PATRIC" id="fig|272944.4.peg.681"/>
<dbReference type="HOGENOM" id="CLU_108953_0_1_5"/>
<dbReference type="Proteomes" id="UP000000816">
    <property type="component" value="Chromosome"/>
</dbReference>
<dbReference type="GO" id="GO:0005829">
    <property type="term" value="C:cytosol"/>
    <property type="evidence" value="ECO:0007669"/>
    <property type="project" value="TreeGrafter"/>
</dbReference>
<dbReference type="GO" id="GO:0003723">
    <property type="term" value="F:RNA binding"/>
    <property type="evidence" value="ECO:0007669"/>
    <property type="project" value="UniProtKB-UniRule"/>
</dbReference>
<dbReference type="GO" id="GO:0070929">
    <property type="term" value="P:trans-translation"/>
    <property type="evidence" value="ECO:0007669"/>
    <property type="project" value="UniProtKB-UniRule"/>
</dbReference>
<dbReference type="CDD" id="cd09294">
    <property type="entry name" value="SmpB"/>
    <property type="match status" value="1"/>
</dbReference>
<dbReference type="Gene3D" id="2.40.280.10">
    <property type="match status" value="1"/>
</dbReference>
<dbReference type="HAMAP" id="MF_00023">
    <property type="entry name" value="SmpB"/>
    <property type="match status" value="1"/>
</dbReference>
<dbReference type="InterPro" id="IPR023620">
    <property type="entry name" value="SmpB"/>
</dbReference>
<dbReference type="InterPro" id="IPR000037">
    <property type="entry name" value="SsrA-bd_prot"/>
</dbReference>
<dbReference type="NCBIfam" id="NF003843">
    <property type="entry name" value="PRK05422.1"/>
    <property type="match status" value="1"/>
</dbReference>
<dbReference type="NCBIfam" id="TIGR00086">
    <property type="entry name" value="smpB"/>
    <property type="match status" value="1"/>
</dbReference>
<dbReference type="PANTHER" id="PTHR30308:SF2">
    <property type="entry name" value="SSRA-BINDING PROTEIN"/>
    <property type="match status" value="1"/>
</dbReference>
<dbReference type="PANTHER" id="PTHR30308">
    <property type="entry name" value="TMRNA-BINDING COMPONENT OF TRANS-TRANSLATION TAGGING COMPLEX"/>
    <property type="match status" value="1"/>
</dbReference>
<dbReference type="Pfam" id="PF01668">
    <property type="entry name" value="SmpB"/>
    <property type="match status" value="1"/>
</dbReference>
<dbReference type="SUPFAM" id="SSF74982">
    <property type="entry name" value="Small protein B (SmpB)"/>
    <property type="match status" value="1"/>
</dbReference>
<reference key="1">
    <citation type="journal article" date="2001" name="Science">
        <title>Mechanisms of evolution in Rickettsia conorii and R. prowazekii.</title>
        <authorList>
            <person name="Ogata H."/>
            <person name="Audic S."/>
            <person name="Renesto-Audiffren P."/>
            <person name="Fournier P.-E."/>
            <person name="Barbe V."/>
            <person name="Samson D."/>
            <person name="Roux V."/>
            <person name="Cossart P."/>
            <person name="Weissenbach J."/>
            <person name="Claverie J.-M."/>
            <person name="Raoult D."/>
        </authorList>
    </citation>
    <scope>NUCLEOTIDE SEQUENCE [LARGE SCALE GENOMIC DNA]</scope>
    <source>
        <strain>ATCC VR-613 / Malish 7</strain>
    </source>
</reference>